<sequence>MSYASEVKKELTGITVHRDNAKAELMALIRMNGSIGIADHQLVLNVQTENPAIARRIYSLLKQFYGVESEIVVRRKMKLKKNNQYIVRLRYHAQHVLDDLGILQNYQIKEQVPVELLKDEWMVRSYLRGAFLAGGSVNNPETSRYHLEIYSLYEEHNEIIAQMMNKFGLNAQTTARRSGFIVYLKEAEKIANFMSLIGATNSMLQFENVRIVRDMRNSVNRLVNCENANLNKIANASTRQIENIEFIDSRVGLSSLPDKLREIAETRLAHQEVSLKELGELVPGGPISKSGVNHRLRKLNAYADELRASEVKQ</sequence>
<proteinExistence type="inferred from homology"/>
<reference key="1">
    <citation type="journal article" date="2011" name="PLoS Genet.">
        <title>The evolution of host specialization in the vertebrate gut symbiont Lactobacillus reuteri.</title>
        <authorList>
            <person name="Frese S.A."/>
            <person name="Benson A.K."/>
            <person name="Tannock G.W."/>
            <person name="Loach D.M."/>
            <person name="Kim J."/>
            <person name="Zhang M."/>
            <person name="Oh P.L."/>
            <person name="Heng N.C."/>
            <person name="Patil P.B."/>
            <person name="Juge N."/>
            <person name="Mackenzie D.A."/>
            <person name="Pearson B.M."/>
            <person name="Lapidus A."/>
            <person name="Dalin E."/>
            <person name="Tice H."/>
            <person name="Goltsman E."/>
            <person name="Land M."/>
            <person name="Hauser L."/>
            <person name="Ivanova N."/>
            <person name="Kyrpides N.C."/>
            <person name="Walter J."/>
        </authorList>
    </citation>
    <scope>NUCLEOTIDE SEQUENCE [LARGE SCALE GENOMIC DNA]</scope>
    <source>
        <strain>DSM 20016</strain>
    </source>
</reference>
<protein>
    <recommendedName>
        <fullName evidence="1">Probable cell division protein WhiA</fullName>
    </recommendedName>
</protein>
<gene>
    <name evidence="1" type="primary">whiA</name>
    <name type="ordered locus">Lreu_0388</name>
</gene>
<dbReference type="EMBL" id="CP000705">
    <property type="protein sequence ID" value="ABQ82657.1"/>
    <property type="molecule type" value="Genomic_DNA"/>
</dbReference>
<dbReference type="RefSeq" id="WP_003667466.1">
    <property type="nucleotide sequence ID" value="NC_009513.1"/>
</dbReference>
<dbReference type="SMR" id="A5VII3"/>
<dbReference type="STRING" id="557436.Lreu_0388"/>
<dbReference type="KEGG" id="lre:Lreu_0388"/>
<dbReference type="PATRIC" id="fig|557436.17.peg.428"/>
<dbReference type="eggNOG" id="COG1481">
    <property type="taxonomic scope" value="Bacteria"/>
</dbReference>
<dbReference type="HOGENOM" id="CLU_053282_0_0_9"/>
<dbReference type="OMA" id="CDAEAAW"/>
<dbReference type="Proteomes" id="UP000001991">
    <property type="component" value="Chromosome"/>
</dbReference>
<dbReference type="GO" id="GO:0003677">
    <property type="term" value="F:DNA binding"/>
    <property type="evidence" value="ECO:0007669"/>
    <property type="project" value="UniProtKB-UniRule"/>
</dbReference>
<dbReference type="GO" id="GO:0051301">
    <property type="term" value="P:cell division"/>
    <property type="evidence" value="ECO:0007669"/>
    <property type="project" value="UniProtKB-UniRule"/>
</dbReference>
<dbReference type="GO" id="GO:0043937">
    <property type="term" value="P:regulation of sporulation"/>
    <property type="evidence" value="ECO:0007669"/>
    <property type="project" value="InterPro"/>
</dbReference>
<dbReference type="Gene3D" id="3.10.28.10">
    <property type="entry name" value="Homing endonucleases"/>
    <property type="match status" value="1"/>
</dbReference>
<dbReference type="HAMAP" id="MF_01420">
    <property type="entry name" value="HTH_type_WhiA"/>
    <property type="match status" value="1"/>
</dbReference>
<dbReference type="InterPro" id="IPR027434">
    <property type="entry name" value="Homing_endonucl"/>
</dbReference>
<dbReference type="InterPro" id="IPR018478">
    <property type="entry name" value="Sporu_reg_WhiA_N_dom"/>
</dbReference>
<dbReference type="InterPro" id="IPR003802">
    <property type="entry name" value="Sporulation_regulator_WhiA"/>
</dbReference>
<dbReference type="InterPro" id="IPR023054">
    <property type="entry name" value="Sporulation_regulator_WhiA_C"/>
</dbReference>
<dbReference type="InterPro" id="IPR039518">
    <property type="entry name" value="WhiA_LAGLIDADG_dom"/>
</dbReference>
<dbReference type="NCBIfam" id="TIGR00647">
    <property type="entry name" value="DNA_bind_WhiA"/>
    <property type="match status" value="1"/>
</dbReference>
<dbReference type="PANTHER" id="PTHR37307">
    <property type="entry name" value="CELL DIVISION PROTEIN WHIA-RELATED"/>
    <property type="match status" value="1"/>
</dbReference>
<dbReference type="PANTHER" id="PTHR37307:SF1">
    <property type="entry name" value="CELL DIVISION PROTEIN WHIA-RELATED"/>
    <property type="match status" value="1"/>
</dbReference>
<dbReference type="Pfam" id="PF02650">
    <property type="entry name" value="HTH_WhiA"/>
    <property type="match status" value="1"/>
</dbReference>
<dbReference type="Pfam" id="PF14527">
    <property type="entry name" value="LAGLIDADG_WhiA"/>
    <property type="match status" value="1"/>
</dbReference>
<dbReference type="Pfam" id="PF10298">
    <property type="entry name" value="WhiA_N"/>
    <property type="match status" value="1"/>
</dbReference>
<dbReference type="SUPFAM" id="SSF55608">
    <property type="entry name" value="Homing endonucleases"/>
    <property type="match status" value="1"/>
</dbReference>
<name>WHIA_LIMRD</name>
<evidence type="ECO:0000255" key="1">
    <source>
        <dbReference type="HAMAP-Rule" id="MF_01420"/>
    </source>
</evidence>
<keyword id="KW-0131">Cell cycle</keyword>
<keyword id="KW-0132">Cell division</keyword>
<keyword id="KW-0238">DNA-binding</keyword>
<keyword id="KW-1185">Reference proteome</keyword>
<comment type="function">
    <text evidence="1">Involved in cell division and chromosome segregation.</text>
</comment>
<comment type="similarity">
    <text evidence="1">Belongs to the WhiA family.</text>
</comment>
<feature type="chain" id="PRO_0000376504" description="Probable cell division protein WhiA">
    <location>
        <begin position="1"/>
        <end position="313"/>
    </location>
</feature>
<feature type="DNA-binding region" description="H-T-H motif" evidence="1">
    <location>
        <begin position="274"/>
        <end position="308"/>
    </location>
</feature>
<organism>
    <name type="scientific">Limosilactobacillus reuteri (strain DSM 20016)</name>
    <name type="common">Lactobacillus reuteri</name>
    <dbReference type="NCBI Taxonomy" id="557436"/>
    <lineage>
        <taxon>Bacteria</taxon>
        <taxon>Bacillati</taxon>
        <taxon>Bacillota</taxon>
        <taxon>Bacilli</taxon>
        <taxon>Lactobacillales</taxon>
        <taxon>Lactobacillaceae</taxon>
        <taxon>Limosilactobacillus</taxon>
    </lineage>
</organism>
<accession>A5VII3</accession>